<feature type="chain" id="PRO_0000377340" description="tRNA dimethylallyltransferase">
    <location>
        <begin position="1"/>
        <end position="307"/>
    </location>
</feature>
<feature type="region of interest" description="Interaction with substrate tRNA" evidence="1">
    <location>
        <begin position="31"/>
        <end position="34"/>
    </location>
</feature>
<feature type="binding site" evidence="1">
    <location>
        <begin position="6"/>
        <end position="13"/>
    </location>
    <ligand>
        <name>ATP</name>
        <dbReference type="ChEBI" id="CHEBI:30616"/>
    </ligand>
</feature>
<feature type="binding site" evidence="1">
    <location>
        <begin position="8"/>
        <end position="13"/>
    </location>
    <ligand>
        <name>substrate</name>
    </ligand>
</feature>
<feature type="site" description="Interaction with substrate tRNA" evidence="1">
    <location>
        <position position="97"/>
    </location>
</feature>
<gene>
    <name evidence="1" type="primary">miaA</name>
    <name type="ordered locus">SYO3AOP1_1307</name>
</gene>
<sequence length="307" mass="35879">MIVIAGATATGKTELCIKLAKLLDGEVISADSMMVYKYMDIGTAKPSVEEREGIEHYVIDVVLPSQNYSVKDYIEDFDKAVQKIREKGKIPIVVGGTWLYIQGALYGLSDAPESDWTLREKLYSLVNLELYTQLQKVDPEYANKIHVNDKRRIVRALEVYYLTGKPFSFFINQHNFKSKRYNFLGFILERDRQELMDRIEIRVEKMFEKGLVEEVKKLVDMGFKDSLTSMQAIGYKEILPYLDKKISLEDAKKCIIENTKDFAKRQIRTFRNKTDFEKIEASKFEVNEMLDYIYRKYNQEVRDVSTR</sequence>
<organism>
    <name type="scientific">Sulfurihydrogenibium sp. (strain YO3AOP1)</name>
    <dbReference type="NCBI Taxonomy" id="436114"/>
    <lineage>
        <taxon>Bacteria</taxon>
        <taxon>Pseudomonadati</taxon>
        <taxon>Aquificota</taxon>
        <taxon>Aquificia</taxon>
        <taxon>Aquificales</taxon>
        <taxon>Hydrogenothermaceae</taxon>
        <taxon>Sulfurihydrogenibium</taxon>
    </lineage>
</organism>
<evidence type="ECO:0000255" key="1">
    <source>
        <dbReference type="HAMAP-Rule" id="MF_00185"/>
    </source>
</evidence>
<proteinExistence type="inferred from homology"/>
<protein>
    <recommendedName>
        <fullName evidence="1">tRNA dimethylallyltransferase</fullName>
        <ecNumber evidence="1">2.5.1.75</ecNumber>
    </recommendedName>
    <alternativeName>
        <fullName evidence="1">Dimethylallyl diphosphate:tRNA dimethylallyltransferase</fullName>
        <shortName evidence="1">DMAPP:tRNA dimethylallyltransferase</shortName>
        <shortName evidence="1">DMATase</shortName>
    </alternativeName>
    <alternativeName>
        <fullName evidence="1">Isopentenyl-diphosphate:tRNA isopentenyltransferase</fullName>
        <shortName evidence="1">IPP transferase</shortName>
        <shortName evidence="1">IPPT</shortName>
        <shortName evidence="1">IPTase</shortName>
    </alternativeName>
</protein>
<name>MIAA_SULSY</name>
<reference key="1">
    <citation type="journal article" date="2009" name="J. Bacteriol.">
        <title>Complete and draft genome sequences of six members of the Aquificales.</title>
        <authorList>
            <person name="Reysenbach A.-L."/>
            <person name="Hamamura N."/>
            <person name="Podar M."/>
            <person name="Griffiths E."/>
            <person name="Ferreira S."/>
            <person name="Hochstein R."/>
            <person name="Heidelberg J."/>
            <person name="Johnson J."/>
            <person name="Mead D."/>
            <person name="Pohorille A."/>
            <person name="Sarmiento M."/>
            <person name="Schweighofer K."/>
            <person name="Seshadri R."/>
            <person name="Voytek M.A."/>
        </authorList>
    </citation>
    <scope>NUCLEOTIDE SEQUENCE [LARGE SCALE GENOMIC DNA]</scope>
    <source>
        <strain>YO3AOP1</strain>
    </source>
</reference>
<accession>B2VAE4</accession>
<keyword id="KW-0067">ATP-binding</keyword>
<keyword id="KW-0460">Magnesium</keyword>
<keyword id="KW-0547">Nucleotide-binding</keyword>
<keyword id="KW-0808">Transferase</keyword>
<keyword id="KW-0819">tRNA processing</keyword>
<dbReference type="EC" id="2.5.1.75" evidence="1"/>
<dbReference type="EMBL" id="CP001080">
    <property type="protein sequence ID" value="ACD66917.1"/>
    <property type="molecule type" value="Genomic_DNA"/>
</dbReference>
<dbReference type="RefSeq" id="WP_012459977.1">
    <property type="nucleotide sequence ID" value="NC_010730.1"/>
</dbReference>
<dbReference type="SMR" id="B2VAE4"/>
<dbReference type="STRING" id="436114.SYO3AOP1_1307"/>
<dbReference type="KEGG" id="sul:SYO3AOP1_1307"/>
<dbReference type="eggNOG" id="COG0324">
    <property type="taxonomic scope" value="Bacteria"/>
</dbReference>
<dbReference type="HOGENOM" id="CLU_032616_0_1_0"/>
<dbReference type="GO" id="GO:0005524">
    <property type="term" value="F:ATP binding"/>
    <property type="evidence" value="ECO:0007669"/>
    <property type="project" value="UniProtKB-UniRule"/>
</dbReference>
<dbReference type="GO" id="GO:0052381">
    <property type="term" value="F:tRNA dimethylallyltransferase activity"/>
    <property type="evidence" value="ECO:0007669"/>
    <property type="project" value="UniProtKB-UniRule"/>
</dbReference>
<dbReference type="GO" id="GO:0006400">
    <property type="term" value="P:tRNA modification"/>
    <property type="evidence" value="ECO:0007669"/>
    <property type="project" value="TreeGrafter"/>
</dbReference>
<dbReference type="Gene3D" id="1.10.20.140">
    <property type="match status" value="1"/>
</dbReference>
<dbReference type="Gene3D" id="3.40.50.300">
    <property type="entry name" value="P-loop containing nucleotide triphosphate hydrolases"/>
    <property type="match status" value="1"/>
</dbReference>
<dbReference type="HAMAP" id="MF_00185">
    <property type="entry name" value="IPP_trans"/>
    <property type="match status" value="1"/>
</dbReference>
<dbReference type="InterPro" id="IPR039657">
    <property type="entry name" value="Dimethylallyltransferase"/>
</dbReference>
<dbReference type="InterPro" id="IPR018022">
    <property type="entry name" value="IPT"/>
</dbReference>
<dbReference type="InterPro" id="IPR027417">
    <property type="entry name" value="P-loop_NTPase"/>
</dbReference>
<dbReference type="NCBIfam" id="TIGR00174">
    <property type="entry name" value="miaA"/>
    <property type="match status" value="1"/>
</dbReference>
<dbReference type="PANTHER" id="PTHR11088">
    <property type="entry name" value="TRNA DIMETHYLALLYLTRANSFERASE"/>
    <property type="match status" value="1"/>
</dbReference>
<dbReference type="PANTHER" id="PTHR11088:SF60">
    <property type="entry name" value="TRNA DIMETHYLALLYLTRANSFERASE"/>
    <property type="match status" value="1"/>
</dbReference>
<dbReference type="Pfam" id="PF01715">
    <property type="entry name" value="IPPT"/>
    <property type="match status" value="1"/>
</dbReference>
<dbReference type="SUPFAM" id="SSF52540">
    <property type="entry name" value="P-loop containing nucleoside triphosphate hydrolases"/>
    <property type="match status" value="2"/>
</dbReference>
<comment type="function">
    <text evidence="1">Catalyzes the transfer of a dimethylallyl group onto the adenine at position 37 in tRNAs that read codons beginning with uridine, leading to the formation of N6-(dimethylallyl)adenosine (i(6)A).</text>
</comment>
<comment type="catalytic activity">
    <reaction evidence="1">
        <text>adenosine(37) in tRNA + dimethylallyl diphosphate = N(6)-dimethylallyladenosine(37) in tRNA + diphosphate</text>
        <dbReference type="Rhea" id="RHEA:26482"/>
        <dbReference type="Rhea" id="RHEA-COMP:10162"/>
        <dbReference type="Rhea" id="RHEA-COMP:10375"/>
        <dbReference type="ChEBI" id="CHEBI:33019"/>
        <dbReference type="ChEBI" id="CHEBI:57623"/>
        <dbReference type="ChEBI" id="CHEBI:74411"/>
        <dbReference type="ChEBI" id="CHEBI:74415"/>
        <dbReference type="EC" id="2.5.1.75"/>
    </reaction>
</comment>
<comment type="cofactor">
    <cofactor evidence="1">
        <name>Mg(2+)</name>
        <dbReference type="ChEBI" id="CHEBI:18420"/>
    </cofactor>
</comment>
<comment type="subunit">
    <text evidence="1">Monomer.</text>
</comment>
<comment type="similarity">
    <text evidence="1">Belongs to the IPP transferase family.</text>
</comment>